<name>PEPT_BACC4</name>
<proteinExistence type="inferred from homology"/>
<protein>
    <recommendedName>
        <fullName evidence="1">Peptidase T</fullName>
        <ecNumber evidence="1">3.4.11.4</ecNumber>
    </recommendedName>
    <alternativeName>
        <fullName evidence="1">Aminotripeptidase</fullName>
        <shortName evidence="1">Tripeptidase</shortName>
    </alternativeName>
    <alternativeName>
        <fullName evidence="1">Tripeptide aminopeptidase</fullName>
    </alternativeName>
</protein>
<comment type="function">
    <text evidence="1">Cleaves the N-terminal amino acid of tripeptides.</text>
</comment>
<comment type="catalytic activity">
    <reaction evidence="1">
        <text>Release of the N-terminal residue from a tripeptide.</text>
        <dbReference type="EC" id="3.4.11.4"/>
    </reaction>
</comment>
<comment type="cofactor">
    <cofactor evidence="1">
        <name>Zn(2+)</name>
        <dbReference type="ChEBI" id="CHEBI:29105"/>
    </cofactor>
    <text evidence="1">Binds 2 Zn(2+) ions per subunit.</text>
</comment>
<comment type="subcellular location">
    <subcellularLocation>
        <location evidence="1">Cytoplasm</location>
    </subcellularLocation>
</comment>
<comment type="similarity">
    <text evidence="1">Belongs to the peptidase M20B family.</text>
</comment>
<dbReference type="EC" id="3.4.11.4" evidence="1"/>
<dbReference type="EMBL" id="CP001176">
    <property type="protein sequence ID" value="ACK61958.1"/>
    <property type="molecule type" value="Genomic_DNA"/>
</dbReference>
<dbReference type="RefSeq" id="WP_000807014.1">
    <property type="nucleotide sequence ID" value="NZ_VEHB01000002.1"/>
</dbReference>
<dbReference type="SMR" id="B7HDL9"/>
<dbReference type="MEROPS" id="M20.003"/>
<dbReference type="KEGG" id="bcb:BCB4264_A3843"/>
<dbReference type="HOGENOM" id="CLU_053676_0_0_9"/>
<dbReference type="Proteomes" id="UP000007096">
    <property type="component" value="Chromosome"/>
</dbReference>
<dbReference type="GO" id="GO:0005829">
    <property type="term" value="C:cytosol"/>
    <property type="evidence" value="ECO:0007669"/>
    <property type="project" value="TreeGrafter"/>
</dbReference>
<dbReference type="GO" id="GO:0008237">
    <property type="term" value="F:metallopeptidase activity"/>
    <property type="evidence" value="ECO:0007669"/>
    <property type="project" value="UniProtKB-KW"/>
</dbReference>
<dbReference type="GO" id="GO:0045148">
    <property type="term" value="F:tripeptide aminopeptidase activity"/>
    <property type="evidence" value="ECO:0007669"/>
    <property type="project" value="UniProtKB-UniRule"/>
</dbReference>
<dbReference type="GO" id="GO:0008270">
    <property type="term" value="F:zinc ion binding"/>
    <property type="evidence" value="ECO:0007669"/>
    <property type="project" value="UniProtKB-UniRule"/>
</dbReference>
<dbReference type="GO" id="GO:0043171">
    <property type="term" value="P:peptide catabolic process"/>
    <property type="evidence" value="ECO:0007669"/>
    <property type="project" value="UniProtKB-UniRule"/>
</dbReference>
<dbReference type="GO" id="GO:0006508">
    <property type="term" value="P:proteolysis"/>
    <property type="evidence" value="ECO:0007669"/>
    <property type="project" value="UniProtKB-UniRule"/>
</dbReference>
<dbReference type="CDD" id="cd03892">
    <property type="entry name" value="M20_peptT"/>
    <property type="match status" value="1"/>
</dbReference>
<dbReference type="FunFam" id="3.30.70.360:FF:000002">
    <property type="entry name" value="Peptidase T"/>
    <property type="match status" value="1"/>
</dbReference>
<dbReference type="Gene3D" id="3.30.70.360">
    <property type="match status" value="1"/>
</dbReference>
<dbReference type="Gene3D" id="3.40.630.10">
    <property type="entry name" value="Zn peptidases"/>
    <property type="match status" value="1"/>
</dbReference>
<dbReference type="HAMAP" id="MF_00550">
    <property type="entry name" value="Aminopeptidase_M20"/>
    <property type="match status" value="1"/>
</dbReference>
<dbReference type="InterPro" id="IPR001261">
    <property type="entry name" value="ArgE/DapE_CS"/>
</dbReference>
<dbReference type="InterPro" id="IPR036264">
    <property type="entry name" value="Bact_exopeptidase_dim_dom"/>
</dbReference>
<dbReference type="InterPro" id="IPR002933">
    <property type="entry name" value="Peptidase_M20"/>
</dbReference>
<dbReference type="InterPro" id="IPR011650">
    <property type="entry name" value="Peptidase_M20_dimer"/>
</dbReference>
<dbReference type="InterPro" id="IPR010161">
    <property type="entry name" value="Peptidase_M20B"/>
</dbReference>
<dbReference type="NCBIfam" id="TIGR01882">
    <property type="entry name" value="peptidase-T"/>
    <property type="match status" value="1"/>
</dbReference>
<dbReference type="NCBIfam" id="NF003976">
    <property type="entry name" value="PRK05469.1"/>
    <property type="match status" value="1"/>
</dbReference>
<dbReference type="NCBIfam" id="NF009920">
    <property type="entry name" value="PRK13381.1"/>
    <property type="match status" value="1"/>
</dbReference>
<dbReference type="PANTHER" id="PTHR42994">
    <property type="entry name" value="PEPTIDASE T"/>
    <property type="match status" value="1"/>
</dbReference>
<dbReference type="PANTHER" id="PTHR42994:SF1">
    <property type="entry name" value="PEPTIDASE T"/>
    <property type="match status" value="1"/>
</dbReference>
<dbReference type="Pfam" id="PF07687">
    <property type="entry name" value="M20_dimer"/>
    <property type="match status" value="1"/>
</dbReference>
<dbReference type="Pfam" id="PF01546">
    <property type="entry name" value="Peptidase_M20"/>
    <property type="match status" value="1"/>
</dbReference>
<dbReference type="PIRSF" id="PIRSF037215">
    <property type="entry name" value="Peptidase_M20B"/>
    <property type="match status" value="1"/>
</dbReference>
<dbReference type="SUPFAM" id="SSF55031">
    <property type="entry name" value="Bacterial exopeptidase dimerisation domain"/>
    <property type="match status" value="1"/>
</dbReference>
<dbReference type="SUPFAM" id="SSF53187">
    <property type="entry name" value="Zn-dependent exopeptidases"/>
    <property type="match status" value="1"/>
</dbReference>
<dbReference type="PROSITE" id="PS00758">
    <property type="entry name" value="ARGE_DAPE_CPG2_1"/>
    <property type="match status" value="1"/>
</dbReference>
<dbReference type="PROSITE" id="PS00759">
    <property type="entry name" value="ARGE_DAPE_CPG2_2"/>
    <property type="match status" value="1"/>
</dbReference>
<evidence type="ECO:0000255" key="1">
    <source>
        <dbReference type="HAMAP-Rule" id="MF_00550"/>
    </source>
</evidence>
<feature type="chain" id="PRO_1000129022" description="Peptidase T">
    <location>
        <begin position="1"/>
        <end position="410"/>
    </location>
</feature>
<feature type="active site" evidence="1">
    <location>
        <position position="81"/>
    </location>
</feature>
<feature type="active site" description="Proton acceptor" evidence="1">
    <location>
        <position position="176"/>
    </location>
</feature>
<feature type="binding site" evidence="1">
    <location>
        <position position="79"/>
    </location>
    <ligand>
        <name>Zn(2+)</name>
        <dbReference type="ChEBI" id="CHEBI:29105"/>
        <label>1</label>
    </ligand>
</feature>
<feature type="binding site" evidence="1">
    <location>
        <position position="142"/>
    </location>
    <ligand>
        <name>Zn(2+)</name>
        <dbReference type="ChEBI" id="CHEBI:29105"/>
        <label>1</label>
    </ligand>
</feature>
<feature type="binding site" evidence="1">
    <location>
        <position position="142"/>
    </location>
    <ligand>
        <name>Zn(2+)</name>
        <dbReference type="ChEBI" id="CHEBI:29105"/>
        <label>2</label>
    </ligand>
</feature>
<feature type="binding site" evidence="1">
    <location>
        <position position="177"/>
    </location>
    <ligand>
        <name>Zn(2+)</name>
        <dbReference type="ChEBI" id="CHEBI:29105"/>
        <label>2</label>
    </ligand>
</feature>
<feature type="binding site" evidence="1">
    <location>
        <position position="199"/>
    </location>
    <ligand>
        <name>Zn(2+)</name>
        <dbReference type="ChEBI" id="CHEBI:29105"/>
        <label>1</label>
    </ligand>
</feature>
<feature type="binding site" evidence="1">
    <location>
        <position position="381"/>
    </location>
    <ligand>
        <name>Zn(2+)</name>
        <dbReference type="ChEBI" id="CHEBI:29105"/>
        <label>2</label>
    </ligand>
</feature>
<keyword id="KW-0031">Aminopeptidase</keyword>
<keyword id="KW-0963">Cytoplasm</keyword>
<keyword id="KW-0378">Hydrolase</keyword>
<keyword id="KW-0479">Metal-binding</keyword>
<keyword id="KW-0482">Metalloprotease</keyword>
<keyword id="KW-0645">Protease</keyword>
<keyword id="KW-0862">Zinc</keyword>
<accession>B7HDL9</accession>
<reference key="1">
    <citation type="submission" date="2008-10" db="EMBL/GenBank/DDBJ databases">
        <title>Genome sequence of Bacillus cereus B4264.</title>
        <authorList>
            <person name="Dodson R.J."/>
            <person name="Durkin A.S."/>
            <person name="Rosovitz M.J."/>
            <person name="Rasko D.A."/>
            <person name="Hoffmaster A."/>
            <person name="Ravel J."/>
            <person name="Sutton G."/>
        </authorList>
    </citation>
    <scope>NUCLEOTIDE SEQUENCE [LARGE SCALE GENOMIC DNA]</scope>
    <source>
        <strain>B4264</strain>
    </source>
</reference>
<organism>
    <name type="scientific">Bacillus cereus (strain B4264)</name>
    <dbReference type="NCBI Taxonomy" id="405532"/>
    <lineage>
        <taxon>Bacteria</taxon>
        <taxon>Bacillati</taxon>
        <taxon>Bacillota</taxon>
        <taxon>Bacilli</taxon>
        <taxon>Bacillales</taxon>
        <taxon>Bacillaceae</taxon>
        <taxon>Bacillus</taxon>
        <taxon>Bacillus cereus group</taxon>
    </lineage>
</organism>
<gene>
    <name evidence="1" type="primary">pepT</name>
    <name type="ordered locus">BCB4264_A3843</name>
</gene>
<sequence>MKQELIERFTRYVKIDTQSNEESHTVPTTPGQIEFGKLLVEELKEIGLTEVTMDDNGYVMATLPANTDKDVPVIGFLAHLDTATDFTGKNVKPQIHENFDGNAITLNEELNVVLTPEQFPELPSYKGHTIITTDGTTLLGADDKAGLTEIMVAMNHLIHNPQIKHGKIRVAFTPDEEIGRGPAHFDVEAFGASFAYTMDGGPLGGLEYESFNAAGAKLTFNGTNTHPGTAKNKMRNATKLAMEFNGYLPVEEAPEYTEGYEGFYHLLSLNGDVEQSKAYYIIRDFDRENFEARKNNVKNIVKTMQEKYGEDAVVLEMNDQYYNMLEKIEPVREIVDIAYEAMKSLDIEPNIHPIRGGTDGSQLSYMGLPTPNIFTGGENYHGKFEYVSVDTMEKAVQVIVEIARRFEEQA</sequence>